<organismHost>
    <name type="scientific">Allium chinense</name>
    <dbReference type="NCBI Taxonomy" id="130426"/>
</organismHost>
<organismHost>
    <name type="scientific">Nicotiana tabacum</name>
    <name type="common">Common tobacco</name>
    <dbReference type="NCBI Taxonomy" id="4097"/>
</organismHost>
<evidence type="ECO:0000250" key="1">
    <source>
        <dbReference type="UniProtKB" id="A0A0S4IJL0"/>
    </source>
</evidence>
<evidence type="ECO:0000250" key="2">
    <source>
        <dbReference type="UniProtKB" id="P03583"/>
    </source>
</evidence>
<evidence type="ECO:0000250" key="3">
    <source>
        <dbReference type="UniProtKB" id="P69513"/>
    </source>
</evidence>
<evidence type="ECO:0000256" key="4">
    <source>
        <dbReference type="SAM" id="MobiDB-lite"/>
    </source>
</evidence>
<evidence type="ECO:0000305" key="5"/>
<accession>Q98746</accession>
<dbReference type="EMBL" id="D63809">
    <property type="protein sequence ID" value="BAA09878.1"/>
    <property type="molecule type" value="Genomic_RNA"/>
</dbReference>
<dbReference type="Proteomes" id="UP000008251">
    <property type="component" value="Genome"/>
</dbReference>
<dbReference type="GO" id="GO:0030430">
    <property type="term" value="C:host cell cytoplasm"/>
    <property type="evidence" value="ECO:0007669"/>
    <property type="project" value="UniProtKB-KW"/>
</dbReference>
<dbReference type="GO" id="GO:0044219">
    <property type="term" value="C:host cell plasmodesma"/>
    <property type="evidence" value="ECO:0007669"/>
    <property type="project" value="UniProtKB-SubCell"/>
</dbReference>
<dbReference type="GO" id="GO:0044163">
    <property type="term" value="C:host cytoskeleton"/>
    <property type="evidence" value="ECO:0000250"/>
    <property type="project" value="UniProtKB"/>
</dbReference>
<dbReference type="GO" id="GO:0003690">
    <property type="term" value="F:double-stranded DNA binding"/>
    <property type="evidence" value="ECO:0000250"/>
    <property type="project" value="UniProtKB"/>
</dbReference>
<dbReference type="GO" id="GO:0003723">
    <property type="term" value="F:RNA binding"/>
    <property type="evidence" value="ECO:0007669"/>
    <property type="project" value="UniProtKB-KW"/>
</dbReference>
<dbReference type="GO" id="GO:0046740">
    <property type="term" value="P:transport of virus in host, cell to cell"/>
    <property type="evidence" value="ECO:0007669"/>
    <property type="project" value="UniProtKB-KW"/>
</dbReference>
<dbReference type="InterPro" id="IPR001022">
    <property type="entry name" value="TMV_movement"/>
</dbReference>
<dbReference type="InterPro" id="IPR028919">
    <property type="entry name" value="Viral_movement"/>
</dbReference>
<dbReference type="Pfam" id="PF01107">
    <property type="entry name" value="MP"/>
    <property type="match status" value="1"/>
</dbReference>
<dbReference type="PRINTS" id="PR00964">
    <property type="entry name" value="MOVEMENT"/>
</dbReference>
<gene>
    <name type="primary">MP</name>
    <name type="synonym">MP30</name>
</gene>
<comment type="function">
    <text evidence="2 3">Transports viral genome to neighboring plant cells directly through plasmosdesmata, without any budding. The movement protein allows efficient cell to cell propagation, by bypassing the host cell wall barrier. Forms a ribonucleoprotein complex with viral RNA. Binds microtubules and modulates microtubule stability. Can bind double-stranded DNA. Triggers host hypersensitive defense reaction in incompatible plants harboring resistance (R) proteins.</text>
</comment>
<comment type="subunit">
    <text evidence="1 2 3">Binds to host RBCS at the plasmodesmata; this interaction seems required for viral systemic movement (By similarity). In resistant plants, interacts with host MBP2C at host microtubules; this interaction prevents virus cell to cell movement. In resistant plants, interacts with host resistance (R) protein (e.g. tomato ToMV resistance protein TM-2(2), AC Q71BG9) at the host plasma membrane; this interaction triggers host defense responses leading to programmed cell death (By similarity).</text>
</comment>
<comment type="subcellular location">
    <subcellularLocation>
        <location evidence="3">Host cytoplasm</location>
        <location evidence="3">Host cytoskeleton</location>
    </subcellularLocation>
    <subcellularLocation>
        <location evidence="3">Host cell junction</location>
        <location evidence="3">Host plasmodesma</location>
    </subcellularLocation>
    <text evidence="2 3">Binds to the host cytoskeleton before being transported to the host plasmodesmata. Observed in virus replication complexes (VRCs) of tobamovirus infected host cells (By similarity). In resistant plants, targeted to the host plasma membrane via the interaction with host resistance (R) protein TM-2 (e.g. tomato ToMV resistance protein TM-2(2), AC Q71BG9) (By similarity).</text>
</comment>
<comment type="similarity">
    <text evidence="5">Belongs to the tobamovirus movement protein family.</text>
</comment>
<organism>
    <name type="scientific">Tobacco mosaic virus (strain Rakkyo)</name>
    <name type="common">TMV-R</name>
    <dbReference type="NCBI Taxonomy" id="138310"/>
    <lineage>
        <taxon>Viruses</taxon>
        <taxon>Riboviria</taxon>
        <taxon>Orthornavirae</taxon>
        <taxon>Kitrinoviricota</taxon>
        <taxon>Alsuviricetes</taxon>
        <taxon>Martellivirales</taxon>
        <taxon>Virgaviridae</taxon>
        <taxon>Tobamovirus</taxon>
        <taxon>Tobacco mosaic virus</taxon>
    </lineage>
</organism>
<sequence>MALVVKGKVNINEFIDLTKMEKILPSMFTPVKSVMCSKVDKIMVHENESLSEVNLLKGVKLIDSGYVCLAGLVVTGEWNLPDNCRGGVSVCLVDKRMERADEATLGSYYTAAAKKRFQFKVVPNYAITTQDAMKNVWQVLVNIRNVKMSAGFCPLSLEFVSVCIVYRNNIKIGLREKITNVRDGGPMELTEEVVDEFMEDVPMSIRLAKFRSRTGKKSVVPKGNFSSRDRSQPNKNYGNAKDFGGMSFKKNNLIDDGSETSVAESDSF</sequence>
<reference key="1">
    <citation type="journal article" date="1996" name="Arch. Virol.">
        <title>Complete nucleotide sequence and synthesis of infectious in vitro transcripts from a full-length cDNA clone of a rakkyo strain of tobacco mosaic virus.</title>
        <authorList>
            <person name="Chen J."/>
            <person name="Watanabe Y."/>
            <person name="Sako N."/>
            <person name="Ohsima K."/>
            <person name="Okada Y."/>
        </authorList>
    </citation>
    <scope>NUCLEOTIDE SEQUENCE [GENOMIC RNA]</scope>
</reference>
<protein>
    <recommendedName>
        <fullName>Movement protein</fullName>
    </recommendedName>
    <alternativeName>
        <fullName>30 kDa protein</fullName>
    </alternativeName>
    <alternativeName>
        <fullName>Cell-to-cell transport protein</fullName>
    </alternativeName>
</protein>
<keyword id="KW-1031">Host cell junction</keyword>
<keyword id="KW-1035">Host cytoplasm</keyword>
<keyword id="KW-1037">Host cytoskeleton</keyword>
<keyword id="KW-0945">Host-virus interaction</keyword>
<keyword id="KW-0694">RNA-binding</keyword>
<keyword id="KW-0813">Transport</keyword>
<keyword id="KW-0916">Viral movement protein</keyword>
<name>MVP_TMVRA</name>
<proteinExistence type="inferred from homology"/>
<feature type="chain" id="PRO_0000144955" description="Movement protein">
    <location>
        <begin position="1"/>
        <end position="268"/>
    </location>
</feature>
<feature type="region of interest" description="Disordered" evidence="4">
    <location>
        <begin position="217"/>
        <end position="268"/>
    </location>
</feature>
<feature type="compositionally biased region" description="Polar residues" evidence="4">
    <location>
        <begin position="259"/>
        <end position="268"/>
    </location>
</feature>